<proteinExistence type="inferred from homology"/>
<protein>
    <recommendedName>
        <fullName evidence="1">Ribosomal protein bS6--L-glutamate ligase</fullName>
        <ecNumber evidence="1">6.3.2.-</ecNumber>
    </recommendedName>
    <alternativeName>
        <fullName evidence="1">Poly-alpha-glutamate synthase</fullName>
    </alternativeName>
    <alternativeName>
        <fullName evidence="1">Ribosomal protein bS6 modification protein</fullName>
    </alternativeName>
</protein>
<name>RIMK_SALHS</name>
<keyword id="KW-0067">ATP-binding</keyword>
<keyword id="KW-0436">Ligase</keyword>
<keyword id="KW-0460">Magnesium</keyword>
<keyword id="KW-0464">Manganese</keyword>
<keyword id="KW-0479">Metal-binding</keyword>
<keyword id="KW-0547">Nucleotide-binding</keyword>
<keyword id="KW-0648">Protein biosynthesis</keyword>
<reference key="1">
    <citation type="journal article" date="2011" name="J. Bacteriol.">
        <title>Comparative genomics of 28 Salmonella enterica isolates: evidence for CRISPR-mediated adaptive sublineage evolution.</title>
        <authorList>
            <person name="Fricke W.F."/>
            <person name="Mammel M.K."/>
            <person name="McDermott P.F."/>
            <person name="Tartera C."/>
            <person name="White D.G."/>
            <person name="Leclerc J.E."/>
            <person name="Ravel J."/>
            <person name="Cebula T.A."/>
        </authorList>
    </citation>
    <scope>NUCLEOTIDE SEQUENCE [LARGE SCALE GENOMIC DNA]</scope>
    <source>
        <strain>SL476</strain>
    </source>
</reference>
<comment type="function">
    <text evidence="1">An L-glutamate ligase that catalyzes the ATP-dependent post-translational addition of glutamate residues to the C-terminus of ribosomal protein bS6 (RpsF). Is also able to catalyze the synthesis of poly-alpha-glutamate in vitro, via ATP hydrolysis from unprotected glutamate as substrate. The number of glutamate residues added to either RpsF or to poly-alpha-glutamate changes with pH.</text>
</comment>
<comment type="cofactor">
    <cofactor evidence="1">
        <name>Mg(2+)</name>
        <dbReference type="ChEBI" id="CHEBI:18420"/>
    </cofactor>
    <cofactor evidence="1">
        <name>Mn(2+)</name>
        <dbReference type="ChEBI" id="CHEBI:29035"/>
    </cofactor>
    <text evidence="1">Binds 2 magnesium or manganese ions per subunit.</text>
</comment>
<comment type="similarity">
    <text evidence="1">Belongs to the RimK family.</text>
</comment>
<feature type="chain" id="PRO_1000146945" description="Ribosomal protein bS6--L-glutamate ligase">
    <location>
        <begin position="1"/>
        <end position="300"/>
    </location>
</feature>
<feature type="domain" description="ATP-grasp" evidence="1">
    <location>
        <begin position="104"/>
        <end position="287"/>
    </location>
</feature>
<feature type="binding site" evidence="1">
    <location>
        <position position="141"/>
    </location>
    <ligand>
        <name>ATP</name>
        <dbReference type="ChEBI" id="CHEBI:30616"/>
    </ligand>
</feature>
<feature type="binding site" evidence="1">
    <location>
        <begin position="178"/>
        <end position="179"/>
    </location>
    <ligand>
        <name>ATP</name>
        <dbReference type="ChEBI" id="CHEBI:30616"/>
    </ligand>
</feature>
<feature type="binding site" evidence="1">
    <location>
        <position position="187"/>
    </location>
    <ligand>
        <name>ATP</name>
        <dbReference type="ChEBI" id="CHEBI:30616"/>
    </ligand>
</feature>
<feature type="binding site" evidence="1">
    <location>
        <begin position="211"/>
        <end position="213"/>
    </location>
    <ligand>
        <name>ATP</name>
        <dbReference type="ChEBI" id="CHEBI:30616"/>
    </ligand>
</feature>
<feature type="binding site" evidence="1">
    <location>
        <position position="248"/>
    </location>
    <ligand>
        <name>Mg(2+)</name>
        <dbReference type="ChEBI" id="CHEBI:18420"/>
        <label>1</label>
    </ligand>
</feature>
<feature type="binding site" evidence="1">
    <location>
        <position position="248"/>
    </location>
    <ligand>
        <name>Mn(2+)</name>
        <dbReference type="ChEBI" id="CHEBI:29035"/>
        <label>1</label>
    </ligand>
</feature>
<feature type="binding site" evidence="1">
    <location>
        <position position="260"/>
    </location>
    <ligand>
        <name>Mg(2+)</name>
        <dbReference type="ChEBI" id="CHEBI:18420"/>
        <label>1</label>
    </ligand>
</feature>
<feature type="binding site" evidence="1">
    <location>
        <position position="260"/>
    </location>
    <ligand>
        <name>Mg(2+)</name>
        <dbReference type="ChEBI" id="CHEBI:18420"/>
        <label>2</label>
    </ligand>
</feature>
<feature type="binding site" evidence="1">
    <location>
        <position position="260"/>
    </location>
    <ligand>
        <name>Mn(2+)</name>
        <dbReference type="ChEBI" id="CHEBI:29035"/>
        <label>1</label>
    </ligand>
</feature>
<feature type="binding site" evidence="1">
    <location>
        <position position="260"/>
    </location>
    <ligand>
        <name>Mn(2+)</name>
        <dbReference type="ChEBI" id="CHEBI:29035"/>
        <label>2</label>
    </ligand>
</feature>
<feature type="binding site" evidence="1">
    <location>
        <position position="262"/>
    </location>
    <ligand>
        <name>Mg(2+)</name>
        <dbReference type="ChEBI" id="CHEBI:18420"/>
        <label>2</label>
    </ligand>
</feature>
<feature type="binding site" evidence="1">
    <location>
        <position position="262"/>
    </location>
    <ligand>
        <name>Mn(2+)</name>
        <dbReference type="ChEBI" id="CHEBI:29035"/>
        <label>2</label>
    </ligand>
</feature>
<dbReference type="EC" id="6.3.2.-" evidence="1"/>
<dbReference type="EMBL" id="CP001120">
    <property type="protein sequence ID" value="ACF67125.1"/>
    <property type="molecule type" value="Genomic_DNA"/>
</dbReference>
<dbReference type="RefSeq" id="WP_000684361.1">
    <property type="nucleotide sequence ID" value="NC_011083.1"/>
</dbReference>
<dbReference type="SMR" id="B4TCX3"/>
<dbReference type="KEGG" id="seh:SeHA_C1009"/>
<dbReference type="HOGENOM" id="CLU_054353_0_1_6"/>
<dbReference type="Proteomes" id="UP000001866">
    <property type="component" value="Chromosome"/>
</dbReference>
<dbReference type="GO" id="GO:0005737">
    <property type="term" value="C:cytoplasm"/>
    <property type="evidence" value="ECO:0007669"/>
    <property type="project" value="TreeGrafter"/>
</dbReference>
<dbReference type="GO" id="GO:0005524">
    <property type="term" value="F:ATP binding"/>
    <property type="evidence" value="ECO:0007669"/>
    <property type="project" value="UniProtKB-UniRule"/>
</dbReference>
<dbReference type="GO" id="GO:0046872">
    <property type="term" value="F:metal ion binding"/>
    <property type="evidence" value="ECO:0007669"/>
    <property type="project" value="UniProtKB-KW"/>
</dbReference>
<dbReference type="GO" id="GO:0018169">
    <property type="term" value="F:ribosomal S6-glutamic acid ligase activity"/>
    <property type="evidence" value="ECO:0007669"/>
    <property type="project" value="UniProtKB-UniRule"/>
</dbReference>
<dbReference type="GO" id="GO:0036211">
    <property type="term" value="P:protein modification process"/>
    <property type="evidence" value="ECO:0007669"/>
    <property type="project" value="InterPro"/>
</dbReference>
<dbReference type="GO" id="GO:0009432">
    <property type="term" value="P:SOS response"/>
    <property type="evidence" value="ECO:0007669"/>
    <property type="project" value="TreeGrafter"/>
</dbReference>
<dbReference type="GO" id="GO:0006412">
    <property type="term" value="P:translation"/>
    <property type="evidence" value="ECO:0007669"/>
    <property type="project" value="UniProtKB-KW"/>
</dbReference>
<dbReference type="FunFam" id="3.40.50.20:FF:000004">
    <property type="entry name" value="Probable alpha-L-glutamate ligase"/>
    <property type="match status" value="1"/>
</dbReference>
<dbReference type="FunFam" id="3.30.1490.20:FF:000005">
    <property type="entry name" value="Probable alpha-L-glutamate ligase 1"/>
    <property type="match status" value="1"/>
</dbReference>
<dbReference type="FunFam" id="3.30.470.20:FF:000016">
    <property type="entry name" value="Ribosomal protein S6--L-glutamate ligase"/>
    <property type="match status" value="1"/>
</dbReference>
<dbReference type="Gene3D" id="3.40.50.20">
    <property type="match status" value="1"/>
</dbReference>
<dbReference type="Gene3D" id="3.30.1490.20">
    <property type="entry name" value="ATP-grasp fold, A domain"/>
    <property type="match status" value="1"/>
</dbReference>
<dbReference type="Gene3D" id="3.30.470.20">
    <property type="entry name" value="ATP-grasp fold, B domain"/>
    <property type="match status" value="1"/>
</dbReference>
<dbReference type="HAMAP" id="MF_01552">
    <property type="entry name" value="RimK"/>
    <property type="match status" value="1"/>
</dbReference>
<dbReference type="InterPro" id="IPR011761">
    <property type="entry name" value="ATP-grasp"/>
</dbReference>
<dbReference type="InterPro" id="IPR013651">
    <property type="entry name" value="ATP-grasp_RimK-type"/>
</dbReference>
<dbReference type="InterPro" id="IPR013815">
    <property type="entry name" value="ATP_grasp_subdomain_1"/>
</dbReference>
<dbReference type="InterPro" id="IPR023533">
    <property type="entry name" value="RimK"/>
</dbReference>
<dbReference type="InterPro" id="IPR041107">
    <property type="entry name" value="Rimk_N"/>
</dbReference>
<dbReference type="InterPro" id="IPR004666">
    <property type="entry name" value="Rp_bS6_RimK/Lys_biosynth_LsyX"/>
</dbReference>
<dbReference type="NCBIfam" id="NF007764">
    <property type="entry name" value="PRK10446.1"/>
    <property type="match status" value="1"/>
</dbReference>
<dbReference type="NCBIfam" id="TIGR00768">
    <property type="entry name" value="rimK_fam"/>
    <property type="match status" value="1"/>
</dbReference>
<dbReference type="PANTHER" id="PTHR21621:SF7">
    <property type="entry name" value="RIBOSOMAL PROTEIN BS6--L-GLUTAMATE LIGASE"/>
    <property type="match status" value="1"/>
</dbReference>
<dbReference type="PANTHER" id="PTHR21621">
    <property type="entry name" value="RIBOSOMAL PROTEIN S6 MODIFICATION PROTEIN"/>
    <property type="match status" value="1"/>
</dbReference>
<dbReference type="Pfam" id="PF08443">
    <property type="entry name" value="RimK"/>
    <property type="match status" value="1"/>
</dbReference>
<dbReference type="Pfam" id="PF18030">
    <property type="entry name" value="Rimk_N"/>
    <property type="match status" value="1"/>
</dbReference>
<dbReference type="SUPFAM" id="SSF56059">
    <property type="entry name" value="Glutathione synthetase ATP-binding domain-like"/>
    <property type="match status" value="1"/>
</dbReference>
<dbReference type="PROSITE" id="PS50975">
    <property type="entry name" value="ATP_GRASP"/>
    <property type="match status" value="1"/>
</dbReference>
<organism>
    <name type="scientific">Salmonella heidelberg (strain SL476)</name>
    <dbReference type="NCBI Taxonomy" id="454169"/>
    <lineage>
        <taxon>Bacteria</taxon>
        <taxon>Pseudomonadati</taxon>
        <taxon>Pseudomonadota</taxon>
        <taxon>Gammaproteobacteria</taxon>
        <taxon>Enterobacterales</taxon>
        <taxon>Enterobacteriaceae</taxon>
        <taxon>Salmonella</taxon>
    </lineage>
</organism>
<evidence type="ECO:0000255" key="1">
    <source>
        <dbReference type="HAMAP-Rule" id="MF_01552"/>
    </source>
</evidence>
<sequence length="300" mass="32294">MKIAILSRDGTLYSCKRLREAAMRRGHLVEILDPLSCYMNINPAASSIHYKGRRLPHFDAVIPRIGSAITFYGTAALRQFELLGSYPLNESVAITRARDKLRSLQLLARQGIDLPITGIAHSPDDTSDLIKMVGGAPLVVKLVEGTQGIGVVLAETRQAAESVIDAFRGLNAHILVQEYIAEAKGCDIRCLVVGNEVVAAIERCAKAGDFRSNLHRGGVASIATITPRERDIAIKAAQTLGLDVAGVDILRAARGPLVMEVNASPGLEGIEKTTGVDIAGRMIQWIERHATPEFCLKIGG</sequence>
<gene>
    <name evidence="1" type="primary">rimK</name>
    <name type="ordered locus">SeHA_C1009</name>
</gene>
<accession>B4TCX3</accession>